<comment type="similarity">
    <text evidence="1">Belongs to the UPF0335 family.</text>
</comment>
<dbReference type="EMBL" id="CP000115">
    <property type="protein sequence ID" value="ABA04251.1"/>
    <property type="molecule type" value="Genomic_DNA"/>
</dbReference>
<dbReference type="RefSeq" id="WP_011314290.1">
    <property type="nucleotide sequence ID" value="NC_007406.1"/>
</dbReference>
<dbReference type="SMR" id="Q3STZ0"/>
<dbReference type="STRING" id="323098.Nwi_0989"/>
<dbReference type="KEGG" id="nwi:Nwi_0989"/>
<dbReference type="eggNOG" id="COG3750">
    <property type="taxonomic scope" value="Bacteria"/>
</dbReference>
<dbReference type="HOGENOM" id="CLU_158651_2_0_5"/>
<dbReference type="OrthoDB" id="9813793at2"/>
<dbReference type="Proteomes" id="UP000002531">
    <property type="component" value="Chromosome"/>
</dbReference>
<dbReference type="GO" id="GO:0003677">
    <property type="term" value="F:DNA binding"/>
    <property type="evidence" value="ECO:0007669"/>
    <property type="project" value="InterPro"/>
</dbReference>
<dbReference type="HAMAP" id="MF_00797">
    <property type="entry name" value="UPF0335"/>
    <property type="match status" value="1"/>
</dbReference>
<dbReference type="InterPro" id="IPR018753">
    <property type="entry name" value="GapR-like"/>
</dbReference>
<dbReference type="InterPro" id="IPR046367">
    <property type="entry name" value="GapR-like_DNA-bd"/>
</dbReference>
<dbReference type="NCBIfam" id="NF010247">
    <property type="entry name" value="PRK13694.1"/>
    <property type="match status" value="1"/>
</dbReference>
<dbReference type="Pfam" id="PF10073">
    <property type="entry name" value="GapR_DNA-bd"/>
    <property type="match status" value="1"/>
</dbReference>
<name>Y989_NITWN</name>
<keyword id="KW-1185">Reference proteome</keyword>
<accession>Q3STZ0</accession>
<gene>
    <name type="ordered locus">Nwi_0989</name>
</gene>
<protein>
    <recommendedName>
        <fullName evidence="1">UPF0335 protein Nwi_0989</fullName>
    </recommendedName>
</protein>
<feature type="chain" id="PRO_1000083685" description="UPF0335 protein Nwi_0989">
    <location>
        <begin position="1"/>
        <end position="89"/>
    </location>
</feature>
<reference key="1">
    <citation type="journal article" date="2006" name="Appl. Environ. Microbiol.">
        <title>Genome sequence of the chemolithoautotrophic nitrite-oxidizing bacterium Nitrobacter winogradskyi Nb-255.</title>
        <authorList>
            <person name="Starkenburg S.R."/>
            <person name="Chain P.S.G."/>
            <person name="Sayavedra-Soto L.A."/>
            <person name="Hauser L."/>
            <person name="Land M.L."/>
            <person name="Larimer F.W."/>
            <person name="Malfatti S.A."/>
            <person name="Klotz M.G."/>
            <person name="Bottomley P.J."/>
            <person name="Arp D.J."/>
            <person name="Hickey W.J."/>
        </authorList>
    </citation>
    <scope>NUCLEOTIDE SEQUENCE [LARGE SCALE GENOMIC DNA]</scope>
    <source>
        <strain>ATCC 25391 / DSM 10237 / CIP 104748 / NCIMB 11846 / Nb-255</strain>
    </source>
</reference>
<evidence type="ECO:0000255" key="1">
    <source>
        <dbReference type="HAMAP-Rule" id="MF_00797"/>
    </source>
</evidence>
<proteinExistence type="inferred from homology"/>
<sequence length="89" mass="10270">MVTAVAAKEEPVTSFAKDQLRAIIERIERLEEEKKTISDDIRDVYAEAKGNGYDVKALRTIVRMRKQDANERQEQETILETYMHALGML</sequence>
<organism>
    <name type="scientific">Nitrobacter winogradskyi (strain ATCC 25391 / DSM 10237 / CIP 104748 / NCIMB 11846 / Nb-255)</name>
    <dbReference type="NCBI Taxonomy" id="323098"/>
    <lineage>
        <taxon>Bacteria</taxon>
        <taxon>Pseudomonadati</taxon>
        <taxon>Pseudomonadota</taxon>
        <taxon>Alphaproteobacteria</taxon>
        <taxon>Hyphomicrobiales</taxon>
        <taxon>Nitrobacteraceae</taxon>
        <taxon>Nitrobacter</taxon>
    </lineage>
</organism>